<gene>
    <name evidence="10" type="primary">CPK20</name>
    <name evidence="13" type="ordered locus">Os07g0568600</name>
    <name type="ordered locus">LOC_Os07g38120</name>
    <name evidence="12" type="ORF">OJ1092_A07.132</name>
    <name evidence="14" type="ORF">OsJ_24795</name>
</gene>
<reference key="1">
    <citation type="journal article" date="2005" name="Nature">
        <title>The map-based sequence of the rice genome.</title>
        <authorList>
            <consortium name="International rice genome sequencing project (IRGSP)"/>
        </authorList>
    </citation>
    <scope>NUCLEOTIDE SEQUENCE [LARGE SCALE GENOMIC DNA]</scope>
    <source>
        <strain>cv. Nipponbare</strain>
    </source>
</reference>
<reference key="2">
    <citation type="journal article" date="2008" name="Nucleic Acids Res.">
        <title>The rice annotation project database (RAP-DB): 2008 update.</title>
        <authorList>
            <consortium name="The rice annotation project (RAP)"/>
        </authorList>
    </citation>
    <scope>GENOME REANNOTATION</scope>
    <source>
        <strain>cv. Nipponbare</strain>
    </source>
</reference>
<reference key="3">
    <citation type="journal article" date="2013" name="Rice">
        <title>Improvement of the Oryza sativa Nipponbare reference genome using next generation sequence and optical map data.</title>
        <authorList>
            <person name="Kawahara Y."/>
            <person name="de la Bastide M."/>
            <person name="Hamilton J.P."/>
            <person name="Kanamori H."/>
            <person name="McCombie W.R."/>
            <person name="Ouyang S."/>
            <person name="Schwartz D.C."/>
            <person name="Tanaka T."/>
            <person name="Wu J."/>
            <person name="Zhou S."/>
            <person name="Childs K.L."/>
            <person name="Davidson R.M."/>
            <person name="Lin H."/>
            <person name="Quesada-Ocampo L."/>
            <person name="Vaillancourt B."/>
            <person name="Sakai H."/>
            <person name="Lee S.S."/>
            <person name="Kim J."/>
            <person name="Numa H."/>
            <person name="Itoh T."/>
            <person name="Buell C.R."/>
            <person name="Matsumoto T."/>
        </authorList>
    </citation>
    <scope>GENOME REANNOTATION</scope>
    <source>
        <strain>cv. Nipponbare</strain>
    </source>
</reference>
<reference key="4">
    <citation type="journal article" date="2005" name="PLoS Biol.">
        <title>The genomes of Oryza sativa: a history of duplications.</title>
        <authorList>
            <person name="Yu J."/>
            <person name="Wang J."/>
            <person name="Lin W."/>
            <person name="Li S."/>
            <person name="Li H."/>
            <person name="Zhou J."/>
            <person name="Ni P."/>
            <person name="Dong W."/>
            <person name="Hu S."/>
            <person name="Zeng C."/>
            <person name="Zhang J."/>
            <person name="Zhang Y."/>
            <person name="Li R."/>
            <person name="Xu Z."/>
            <person name="Li S."/>
            <person name="Li X."/>
            <person name="Zheng H."/>
            <person name="Cong L."/>
            <person name="Lin L."/>
            <person name="Yin J."/>
            <person name="Geng J."/>
            <person name="Li G."/>
            <person name="Shi J."/>
            <person name="Liu J."/>
            <person name="Lv H."/>
            <person name="Li J."/>
            <person name="Wang J."/>
            <person name="Deng Y."/>
            <person name="Ran L."/>
            <person name="Shi X."/>
            <person name="Wang X."/>
            <person name="Wu Q."/>
            <person name="Li C."/>
            <person name="Ren X."/>
            <person name="Wang J."/>
            <person name="Wang X."/>
            <person name="Li D."/>
            <person name="Liu D."/>
            <person name="Zhang X."/>
            <person name="Ji Z."/>
            <person name="Zhao W."/>
            <person name="Sun Y."/>
            <person name="Zhang Z."/>
            <person name="Bao J."/>
            <person name="Han Y."/>
            <person name="Dong L."/>
            <person name="Ji J."/>
            <person name="Chen P."/>
            <person name="Wu S."/>
            <person name="Liu J."/>
            <person name="Xiao Y."/>
            <person name="Bu D."/>
            <person name="Tan J."/>
            <person name="Yang L."/>
            <person name="Ye C."/>
            <person name="Zhang J."/>
            <person name="Xu J."/>
            <person name="Zhou Y."/>
            <person name="Yu Y."/>
            <person name="Zhang B."/>
            <person name="Zhuang S."/>
            <person name="Wei H."/>
            <person name="Liu B."/>
            <person name="Lei M."/>
            <person name="Yu H."/>
            <person name="Li Y."/>
            <person name="Xu H."/>
            <person name="Wei S."/>
            <person name="He X."/>
            <person name="Fang L."/>
            <person name="Zhang Z."/>
            <person name="Zhang Y."/>
            <person name="Huang X."/>
            <person name="Su Z."/>
            <person name="Tong W."/>
            <person name="Li J."/>
            <person name="Tong Z."/>
            <person name="Li S."/>
            <person name="Ye J."/>
            <person name="Wang L."/>
            <person name="Fang L."/>
            <person name="Lei T."/>
            <person name="Chen C.-S."/>
            <person name="Chen H.-C."/>
            <person name="Xu Z."/>
            <person name="Li H."/>
            <person name="Huang H."/>
            <person name="Zhang F."/>
            <person name="Xu H."/>
            <person name="Li N."/>
            <person name="Zhao C."/>
            <person name="Li S."/>
            <person name="Dong L."/>
            <person name="Huang Y."/>
            <person name="Li L."/>
            <person name="Xi Y."/>
            <person name="Qi Q."/>
            <person name="Li W."/>
            <person name="Zhang B."/>
            <person name="Hu W."/>
            <person name="Zhang Y."/>
            <person name="Tian X."/>
            <person name="Jiao Y."/>
            <person name="Liang X."/>
            <person name="Jin J."/>
            <person name="Gao L."/>
            <person name="Zheng W."/>
            <person name="Hao B."/>
            <person name="Liu S.-M."/>
            <person name="Wang W."/>
            <person name="Yuan L."/>
            <person name="Cao M."/>
            <person name="McDermott J."/>
            <person name="Samudrala R."/>
            <person name="Wang J."/>
            <person name="Wong G.K.-S."/>
            <person name="Yang H."/>
        </authorList>
    </citation>
    <scope>NUCLEOTIDE SEQUENCE [LARGE SCALE GENOMIC DNA]</scope>
    <source>
        <strain>cv. Nipponbare</strain>
    </source>
</reference>
<reference key="5">
    <citation type="journal article" date="2003" name="Plant Mol. Biol.">
        <title>Rice gene expression in response to N-acetylchitooligosaccharide elicitor: comprehensive analysis by DNA microarray with randomly selected ESTs.</title>
        <authorList>
            <person name="Akimoto-Tomiyama C."/>
            <person name="Sakata K."/>
            <person name="Yazaki J."/>
            <person name="Nakamura K."/>
            <person name="Fujii F."/>
            <person name="Shimbo K."/>
            <person name="Yamamoto K."/>
            <person name="Sasaki T."/>
            <person name="Kishimoto N."/>
            <person name="Kikuchi S."/>
            <person name="Shibuya N."/>
            <person name="Minami E."/>
        </authorList>
    </citation>
    <scope>INDUCTION BY N-ACETYLCHITOOLIGOSACCHARIDE ELICITOR</scope>
</reference>
<reference key="6">
    <citation type="journal article" date="2005" name="Plant Cell Physiol.">
        <title>Genome-wide identification of the rice calcium-dependent protein kinase and its closely related kinase gene families: comprehensive analysis of the CDPKs gene family in rice.</title>
        <authorList>
            <person name="Asano T."/>
            <person name="Tanaka N."/>
            <person name="Yang G."/>
            <person name="Hayashi N."/>
            <person name="Komatsu S."/>
        </authorList>
    </citation>
    <scope>GENE FAMILY</scope>
    <scope>NOMENCLATURE</scope>
    <scope>TISSUE SPECIFICITY</scope>
</reference>
<reference key="7">
    <citation type="journal article" date="2013" name="Phytochemistry">
        <title>Transcriptomic analysis of UV-treated rice leaves reveals UV-induced phytoalexin biosynthetic pathways and their regulatory networks in rice.</title>
        <authorList>
            <person name="Park H.L."/>
            <person name="Lee S.W."/>
            <person name="Jung K.H."/>
            <person name="Hahn T.R."/>
            <person name="Cho M.H."/>
        </authorList>
    </citation>
    <scope>INDUCTION BY UV-C</scope>
</reference>
<organism>
    <name type="scientific">Oryza sativa subsp. japonica</name>
    <name type="common">Rice</name>
    <dbReference type="NCBI Taxonomy" id="39947"/>
    <lineage>
        <taxon>Eukaryota</taxon>
        <taxon>Viridiplantae</taxon>
        <taxon>Streptophyta</taxon>
        <taxon>Embryophyta</taxon>
        <taxon>Tracheophyta</taxon>
        <taxon>Spermatophyta</taxon>
        <taxon>Magnoliopsida</taxon>
        <taxon>Liliopsida</taxon>
        <taxon>Poales</taxon>
        <taxon>Poaceae</taxon>
        <taxon>BOP clade</taxon>
        <taxon>Oryzoideae</taxon>
        <taxon>Oryzeae</taxon>
        <taxon>Oryzinae</taxon>
        <taxon>Oryza</taxon>
        <taxon>Oryza sativa</taxon>
    </lineage>
</organism>
<accession>Q84SL0</accession>
<comment type="function">
    <text evidence="2">May play a role in signal transduction pathways that involve calcium as a second messenger.</text>
</comment>
<comment type="catalytic activity">
    <reaction evidence="1">
        <text>L-seryl-[protein] + ATP = O-phospho-L-seryl-[protein] + ADP + H(+)</text>
        <dbReference type="Rhea" id="RHEA:17989"/>
        <dbReference type="Rhea" id="RHEA-COMP:9863"/>
        <dbReference type="Rhea" id="RHEA-COMP:11604"/>
        <dbReference type="ChEBI" id="CHEBI:15378"/>
        <dbReference type="ChEBI" id="CHEBI:29999"/>
        <dbReference type="ChEBI" id="CHEBI:30616"/>
        <dbReference type="ChEBI" id="CHEBI:83421"/>
        <dbReference type="ChEBI" id="CHEBI:456216"/>
        <dbReference type="EC" id="2.7.11.1"/>
    </reaction>
</comment>
<comment type="catalytic activity">
    <reaction evidence="1">
        <text>L-threonyl-[protein] + ATP = O-phospho-L-threonyl-[protein] + ADP + H(+)</text>
        <dbReference type="Rhea" id="RHEA:46608"/>
        <dbReference type="Rhea" id="RHEA-COMP:11060"/>
        <dbReference type="Rhea" id="RHEA-COMP:11605"/>
        <dbReference type="ChEBI" id="CHEBI:15378"/>
        <dbReference type="ChEBI" id="CHEBI:30013"/>
        <dbReference type="ChEBI" id="CHEBI:30616"/>
        <dbReference type="ChEBI" id="CHEBI:61977"/>
        <dbReference type="ChEBI" id="CHEBI:456216"/>
        <dbReference type="EC" id="2.7.11.1"/>
    </reaction>
</comment>
<comment type="activity regulation">
    <text evidence="11">Activated by calcium. Autophosphorylation may play an important role in the regulation of the kinase activity.</text>
</comment>
<comment type="subcellular location">
    <subcellularLocation>
        <location evidence="11">Membrane</location>
        <topology evidence="11">Lipid-anchor</topology>
    </subcellularLocation>
</comment>
<comment type="tissue specificity">
    <text evidence="8">Expressed in roots and leaf blades.</text>
</comment>
<comment type="induction">
    <text evidence="7 9">By N-acetylchitooligosaccharide elicitor (PubMed:12956525). Induced by UV-C (PubMed:24035516).</text>
</comment>
<comment type="domain">
    <text evidence="2">There are 3 contiguous domains conserved in the CDPK subfamily: a kinase domain, an autoinhibitory (junction) domain and a calmodulin-like domain. The autoinhibitory domain (339-369) inactivates kinase activity under calcium-free conditions.</text>
</comment>
<comment type="similarity">
    <text evidence="11">Belongs to the protein kinase superfamily. Ser/Thr protein kinase family. CDPK subfamily.</text>
</comment>
<proteinExistence type="evidence at transcript level"/>
<name>CDPKK_ORYSJ</name>
<protein>
    <recommendedName>
        <fullName evidence="11">Calcium-dependent protein kinase 20</fullName>
        <shortName evidence="11">OsCDPK20</shortName>
        <shortName evidence="10">OsCPK20</shortName>
        <ecNumber evidence="11">2.7.11.1</ecNumber>
    </recommendedName>
</protein>
<keyword id="KW-0067">ATP-binding</keyword>
<keyword id="KW-0106">Calcium</keyword>
<keyword id="KW-0418">Kinase</keyword>
<keyword id="KW-0449">Lipoprotein</keyword>
<keyword id="KW-0472">Membrane</keyword>
<keyword id="KW-0479">Metal-binding</keyword>
<keyword id="KW-0519">Myristate</keyword>
<keyword id="KW-0547">Nucleotide-binding</keyword>
<keyword id="KW-1185">Reference proteome</keyword>
<keyword id="KW-0677">Repeat</keyword>
<keyword id="KW-0723">Serine/threonine-protein kinase</keyword>
<keyword id="KW-0808">Transferase</keyword>
<evidence type="ECO:0000250" key="1">
    <source>
        <dbReference type="UniProtKB" id="P53684"/>
    </source>
</evidence>
<evidence type="ECO:0000250" key="2">
    <source>
        <dbReference type="UniProtKB" id="Q06850"/>
    </source>
</evidence>
<evidence type="ECO:0000255" key="3"/>
<evidence type="ECO:0000255" key="4">
    <source>
        <dbReference type="PROSITE-ProRule" id="PRU00159"/>
    </source>
</evidence>
<evidence type="ECO:0000255" key="5">
    <source>
        <dbReference type="PROSITE-ProRule" id="PRU00448"/>
    </source>
</evidence>
<evidence type="ECO:0000256" key="6">
    <source>
        <dbReference type="SAM" id="MobiDB-lite"/>
    </source>
</evidence>
<evidence type="ECO:0000269" key="7">
    <source>
    </source>
</evidence>
<evidence type="ECO:0000269" key="8">
    <source>
    </source>
</evidence>
<evidence type="ECO:0000269" key="9">
    <source>
    </source>
</evidence>
<evidence type="ECO:0000303" key="10">
    <source>
    </source>
</evidence>
<evidence type="ECO:0000305" key="11"/>
<evidence type="ECO:0000312" key="12">
    <source>
        <dbReference type="EMBL" id="BAC83205.1"/>
    </source>
</evidence>
<evidence type="ECO:0000312" key="13">
    <source>
        <dbReference type="EMBL" id="BAF21945.1"/>
    </source>
</evidence>
<evidence type="ECO:0000312" key="14">
    <source>
        <dbReference type="EMBL" id="EAZ40349.1"/>
    </source>
</evidence>
<feature type="initiator methionine" description="Removed" evidence="3">
    <location>
        <position position="1"/>
    </location>
</feature>
<feature type="chain" id="PRO_0000437563" description="Calcium-dependent protein kinase 20">
    <location>
        <begin position="2"/>
        <end position="550"/>
    </location>
</feature>
<feature type="domain" description="Protein kinase" evidence="4">
    <location>
        <begin position="75"/>
        <end position="333"/>
    </location>
</feature>
<feature type="domain" description="EF-hand 1" evidence="5">
    <location>
        <begin position="376"/>
        <end position="411"/>
    </location>
</feature>
<feature type="domain" description="EF-hand 2" evidence="5">
    <location>
        <begin position="412"/>
        <end position="447"/>
    </location>
</feature>
<feature type="domain" description="EF-hand 3" evidence="5">
    <location>
        <begin position="448"/>
        <end position="483"/>
    </location>
</feature>
<feature type="domain" description="EF-hand 4" evidence="5">
    <location>
        <begin position="484"/>
        <end position="519"/>
    </location>
</feature>
<feature type="region of interest" description="Disordered" evidence="6">
    <location>
        <begin position="1"/>
        <end position="58"/>
    </location>
</feature>
<feature type="region of interest" description="Autoinhibitory domain" evidence="2">
    <location>
        <begin position="339"/>
        <end position="369"/>
    </location>
</feature>
<feature type="compositionally biased region" description="Basic and acidic residues" evidence="6">
    <location>
        <begin position="18"/>
        <end position="30"/>
    </location>
</feature>
<feature type="active site" description="Proton acceptor" evidence="4">
    <location>
        <position position="199"/>
    </location>
</feature>
<feature type="binding site" evidence="4">
    <location>
        <begin position="81"/>
        <end position="89"/>
    </location>
    <ligand>
        <name>ATP</name>
        <dbReference type="ChEBI" id="CHEBI:30616"/>
    </ligand>
</feature>
<feature type="binding site" evidence="4">
    <location>
        <position position="104"/>
    </location>
    <ligand>
        <name>ATP</name>
        <dbReference type="ChEBI" id="CHEBI:30616"/>
    </ligand>
</feature>
<feature type="binding site" evidence="5">
    <location>
        <position position="389"/>
    </location>
    <ligand>
        <name>Ca(2+)</name>
        <dbReference type="ChEBI" id="CHEBI:29108"/>
        <label>1</label>
    </ligand>
</feature>
<feature type="binding site" evidence="5">
    <location>
        <position position="391"/>
    </location>
    <ligand>
        <name>Ca(2+)</name>
        <dbReference type="ChEBI" id="CHEBI:29108"/>
        <label>1</label>
    </ligand>
</feature>
<feature type="binding site" evidence="5">
    <location>
        <position position="393"/>
    </location>
    <ligand>
        <name>Ca(2+)</name>
        <dbReference type="ChEBI" id="CHEBI:29108"/>
        <label>1</label>
    </ligand>
</feature>
<feature type="binding site" evidence="5">
    <location>
        <position position="395"/>
    </location>
    <ligand>
        <name>Ca(2+)</name>
        <dbReference type="ChEBI" id="CHEBI:29108"/>
        <label>1</label>
    </ligand>
</feature>
<feature type="binding site" evidence="5">
    <location>
        <position position="400"/>
    </location>
    <ligand>
        <name>Ca(2+)</name>
        <dbReference type="ChEBI" id="CHEBI:29108"/>
        <label>1</label>
    </ligand>
</feature>
<feature type="binding site" evidence="5">
    <location>
        <position position="425"/>
    </location>
    <ligand>
        <name>Ca(2+)</name>
        <dbReference type="ChEBI" id="CHEBI:29108"/>
        <label>2</label>
    </ligand>
</feature>
<feature type="binding site" evidence="5">
    <location>
        <position position="427"/>
    </location>
    <ligand>
        <name>Ca(2+)</name>
        <dbReference type="ChEBI" id="CHEBI:29108"/>
        <label>2</label>
    </ligand>
</feature>
<feature type="binding site" evidence="5">
    <location>
        <position position="429"/>
    </location>
    <ligand>
        <name>Ca(2+)</name>
        <dbReference type="ChEBI" id="CHEBI:29108"/>
        <label>2</label>
    </ligand>
</feature>
<feature type="binding site" evidence="5">
    <location>
        <position position="431"/>
    </location>
    <ligand>
        <name>Ca(2+)</name>
        <dbReference type="ChEBI" id="CHEBI:29108"/>
        <label>2</label>
    </ligand>
</feature>
<feature type="binding site" evidence="5">
    <location>
        <position position="436"/>
    </location>
    <ligand>
        <name>Ca(2+)</name>
        <dbReference type="ChEBI" id="CHEBI:29108"/>
        <label>2</label>
    </ligand>
</feature>
<feature type="binding site" evidence="5">
    <location>
        <position position="461"/>
    </location>
    <ligand>
        <name>Ca(2+)</name>
        <dbReference type="ChEBI" id="CHEBI:29108"/>
        <label>3</label>
    </ligand>
</feature>
<feature type="binding site" evidence="5">
    <location>
        <position position="463"/>
    </location>
    <ligand>
        <name>Ca(2+)</name>
        <dbReference type="ChEBI" id="CHEBI:29108"/>
        <label>3</label>
    </ligand>
</feature>
<feature type="binding site" evidence="5">
    <location>
        <position position="465"/>
    </location>
    <ligand>
        <name>Ca(2+)</name>
        <dbReference type="ChEBI" id="CHEBI:29108"/>
        <label>3</label>
    </ligand>
</feature>
<feature type="binding site" evidence="5">
    <location>
        <position position="467"/>
    </location>
    <ligand>
        <name>Ca(2+)</name>
        <dbReference type="ChEBI" id="CHEBI:29108"/>
        <label>3</label>
    </ligand>
</feature>
<feature type="binding site" evidence="5">
    <location>
        <position position="472"/>
    </location>
    <ligand>
        <name>Ca(2+)</name>
        <dbReference type="ChEBI" id="CHEBI:29108"/>
        <label>3</label>
    </ligand>
</feature>
<feature type="binding site" evidence="5">
    <location>
        <position position="497"/>
    </location>
    <ligand>
        <name>Ca(2+)</name>
        <dbReference type="ChEBI" id="CHEBI:29108"/>
        <label>4</label>
    </ligand>
</feature>
<feature type="binding site" evidence="5">
    <location>
        <position position="499"/>
    </location>
    <ligand>
        <name>Ca(2+)</name>
        <dbReference type="ChEBI" id="CHEBI:29108"/>
        <label>4</label>
    </ligand>
</feature>
<feature type="binding site" evidence="5">
    <location>
        <position position="501"/>
    </location>
    <ligand>
        <name>Ca(2+)</name>
        <dbReference type="ChEBI" id="CHEBI:29108"/>
        <label>4</label>
    </ligand>
</feature>
<feature type="binding site" evidence="5">
    <location>
        <position position="503"/>
    </location>
    <ligand>
        <name>Ca(2+)</name>
        <dbReference type="ChEBI" id="CHEBI:29108"/>
        <label>4</label>
    </ligand>
</feature>
<feature type="binding site" evidence="5">
    <location>
        <position position="508"/>
    </location>
    <ligand>
        <name>Ca(2+)</name>
        <dbReference type="ChEBI" id="CHEBI:29108"/>
        <label>4</label>
    </ligand>
</feature>
<feature type="lipid moiety-binding region" description="N-myristoyl glycine" evidence="3">
    <location>
        <position position="2"/>
    </location>
</feature>
<sequence>MGNCCVTPEGSGRGRKKQQQEQKQKQKEPKQQQQQQKKGKKPNPFSIEYNRSSAPSGHRLVVLREPTGRDIAARYELGGELGRGEFGVTYLCTERETGDAYACKSISKKKLRTAVDIEDVRREVDIMRHLPKHPNIVTLRDTYEDDNAVHLVMELCEGGELFDRIVARGHYTERAAALVTRTIVEVVQMCHKHGVMHRDLKPENFLFANKKETAALKAIDFGLSVFFTPGERFTEIVGSPYYMAPEVLKRNYGPEVDVWSAGVILYILLCGVPPFWAETEQGVAQAIIRSVIDFKRDPWPRVSDNAKDLVKGMLNPDPRRRLNAQQVLDHPWLQNIKKAPNVNLGETVKARLQQFSVMNKFKKHALRVIAEHLSVEEVAGIKDMFEKMDLNKDNMINFDELKLGLHKLGHQMADADVQILMDAADVDGNGSLDYGEFVALSVHLRKIGNDEHLHKAFAYFDRNQSGYIEIDELRESLADDLGANHEEVINAIIRDVDTDKDGKISYDEFAAMMKAGTDWRKASRQYSRERFTSLSLKLQKDGSLQLTTTQ</sequence>
<dbReference type="EC" id="2.7.11.1" evidence="11"/>
<dbReference type="EMBL" id="AP003866">
    <property type="protein sequence ID" value="BAC83205.1"/>
    <property type="molecule type" value="Genomic_DNA"/>
</dbReference>
<dbReference type="EMBL" id="AP008213">
    <property type="protein sequence ID" value="BAF21945.1"/>
    <property type="molecule type" value="Genomic_DNA"/>
</dbReference>
<dbReference type="EMBL" id="AP014963">
    <property type="protein sequence ID" value="BAT02209.1"/>
    <property type="molecule type" value="Genomic_DNA"/>
</dbReference>
<dbReference type="EMBL" id="CM000144">
    <property type="protein sequence ID" value="EAZ40349.1"/>
    <property type="molecule type" value="Genomic_DNA"/>
</dbReference>
<dbReference type="RefSeq" id="XP_015647618.1">
    <property type="nucleotide sequence ID" value="XM_015792132.1"/>
</dbReference>
<dbReference type="SMR" id="Q84SL0"/>
<dbReference type="FunCoup" id="Q84SL0">
    <property type="interactions" value="1949"/>
</dbReference>
<dbReference type="STRING" id="39947.Q84SL0"/>
<dbReference type="iPTMnet" id="Q84SL0"/>
<dbReference type="PaxDb" id="39947-Q84SL0"/>
<dbReference type="EnsemblPlants" id="Os07t0568600-01">
    <property type="protein sequence ID" value="Os07t0568600-01"/>
    <property type="gene ID" value="Os07g0568600"/>
</dbReference>
<dbReference type="Gramene" id="Os07t0568600-01">
    <property type="protein sequence ID" value="Os07t0568600-01"/>
    <property type="gene ID" value="Os07g0568600"/>
</dbReference>
<dbReference type="KEGG" id="dosa:Os07g0568600"/>
<dbReference type="eggNOG" id="KOG0032">
    <property type="taxonomic scope" value="Eukaryota"/>
</dbReference>
<dbReference type="HOGENOM" id="CLU_000288_37_4_1"/>
<dbReference type="InParanoid" id="Q84SL0"/>
<dbReference type="OMA" id="GNCCATT"/>
<dbReference type="OrthoDB" id="40902at2759"/>
<dbReference type="Proteomes" id="UP000000763">
    <property type="component" value="Chromosome 7"/>
</dbReference>
<dbReference type="Proteomes" id="UP000007752">
    <property type="component" value="Chromosome 7"/>
</dbReference>
<dbReference type="Proteomes" id="UP000059680">
    <property type="component" value="Chromosome 7"/>
</dbReference>
<dbReference type="ExpressionAtlas" id="Q84SL0">
    <property type="expression patterns" value="baseline and differential"/>
</dbReference>
<dbReference type="GO" id="GO:0005737">
    <property type="term" value="C:cytoplasm"/>
    <property type="evidence" value="ECO:0000318"/>
    <property type="project" value="GO_Central"/>
</dbReference>
<dbReference type="GO" id="GO:0005634">
    <property type="term" value="C:nucleus"/>
    <property type="evidence" value="ECO:0000318"/>
    <property type="project" value="GO_Central"/>
</dbReference>
<dbReference type="GO" id="GO:0005886">
    <property type="term" value="C:plasma membrane"/>
    <property type="evidence" value="ECO:0000318"/>
    <property type="project" value="GO_Central"/>
</dbReference>
<dbReference type="GO" id="GO:0005524">
    <property type="term" value="F:ATP binding"/>
    <property type="evidence" value="ECO:0007669"/>
    <property type="project" value="UniProtKB-KW"/>
</dbReference>
<dbReference type="GO" id="GO:0005509">
    <property type="term" value="F:calcium ion binding"/>
    <property type="evidence" value="ECO:0007669"/>
    <property type="project" value="InterPro"/>
</dbReference>
<dbReference type="GO" id="GO:0009931">
    <property type="term" value="F:calcium-dependent protein serine/threonine kinase activity"/>
    <property type="evidence" value="ECO:0000318"/>
    <property type="project" value="GO_Central"/>
</dbReference>
<dbReference type="GO" id="GO:0004683">
    <property type="term" value="F:calcium/calmodulin-dependent protein kinase activity"/>
    <property type="evidence" value="ECO:0000318"/>
    <property type="project" value="GO_Central"/>
</dbReference>
<dbReference type="GO" id="GO:0005516">
    <property type="term" value="F:calmodulin binding"/>
    <property type="evidence" value="ECO:0000318"/>
    <property type="project" value="GO_Central"/>
</dbReference>
<dbReference type="GO" id="GO:0106310">
    <property type="term" value="F:protein serine kinase activity"/>
    <property type="evidence" value="ECO:0007669"/>
    <property type="project" value="RHEA"/>
</dbReference>
<dbReference type="GO" id="GO:0035556">
    <property type="term" value="P:intracellular signal transduction"/>
    <property type="evidence" value="ECO:0000318"/>
    <property type="project" value="GO_Central"/>
</dbReference>
<dbReference type="CDD" id="cd00051">
    <property type="entry name" value="EFh"/>
    <property type="match status" value="1"/>
</dbReference>
<dbReference type="CDD" id="cd05117">
    <property type="entry name" value="STKc_CAMK"/>
    <property type="match status" value="1"/>
</dbReference>
<dbReference type="FunFam" id="3.30.200.20:FF:000004">
    <property type="entry name" value="Calcium-dependent protein kinase 1"/>
    <property type="match status" value="1"/>
</dbReference>
<dbReference type="FunFam" id="1.10.510.10:FF:000067">
    <property type="entry name" value="calcium-dependent protein kinase 13"/>
    <property type="match status" value="1"/>
</dbReference>
<dbReference type="FunFam" id="1.10.238.10:FF:000050">
    <property type="entry name" value="Calcium-dependent protein kinase 7"/>
    <property type="match status" value="1"/>
</dbReference>
<dbReference type="Gene3D" id="1.10.238.10">
    <property type="entry name" value="EF-hand"/>
    <property type="match status" value="1"/>
</dbReference>
<dbReference type="Gene3D" id="3.30.200.20">
    <property type="entry name" value="Phosphorylase Kinase, domain 1"/>
    <property type="match status" value="1"/>
</dbReference>
<dbReference type="Gene3D" id="1.10.510.10">
    <property type="entry name" value="Transferase(Phosphotransferase) domain 1"/>
    <property type="match status" value="1"/>
</dbReference>
<dbReference type="InterPro" id="IPR050205">
    <property type="entry name" value="CDPK_Ser/Thr_kinases"/>
</dbReference>
<dbReference type="InterPro" id="IPR011992">
    <property type="entry name" value="EF-hand-dom_pair"/>
</dbReference>
<dbReference type="InterPro" id="IPR018247">
    <property type="entry name" value="EF_Hand_1_Ca_BS"/>
</dbReference>
<dbReference type="InterPro" id="IPR002048">
    <property type="entry name" value="EF_hand_dom"/>
</dbReference>
<dbReference type="InterPro" id="IPR011009">
    <property type="entry name" value="Kinase-like_dom_sf"/>
</dbReference>
<dbReference type="InterPro" id="IPR000719">
    <property type="entry name" value="Prot_kinase_dom"/>
</dbReference>
<dbReference type="InterPro" id="IPR017441">
    <property type="entry name" value="Protein_kinase_ATP_BS"/>
</dbReference>
<dbReference type="InterPro" id="IPR008271">
    <property type="entry name" value="Ser/Thr_kinase_AS"/>
</dbReference>
<dbReference type="PANTHER" id="PTHR24349">
    <property type="entry name" value="SERINE/THREONINE-PROTEIN KINASE"/>
    <property type="match status" value="1"/>
</dbReference>
<dbReference type="Pfam" id="PF13499">
    <property type="entry name" value="EF-hand_7"/>
    <property type="match status" value="2"/>
</dbReference>
<dbReference type="Pfam" id="PF00069">
    <property type="entry name" value="Pkinase"/>
    <property type="match status" value="1"/>
</dbReference>
<dbReference type="SMART" id="SM00054">
    <property type="entry name" value="EFh"/>
    <property type="match status" value="4"/>
</dbReference>
<dbReference type="SMART" id="SM00220">
    <property type="entry name" value="S_TKc"/>
    <property type="match status" value="1"/>
</dbReference>
<dbReference type="SUPFAM" id="SSF47473">
    <property type="entry name" value="EF-hand"/>
    <property type="match status" value="1"/>
</dbReference>
<dbReference type="SUPFAM" id="SSF56112">
    <property type="entry name" value="Protein kinase-like (PK-like)"/>
    <property type="match status" value="1"/>
</dbReference>
<dbReference type="PROSITE" id="PS00018">
    <property type="entry name" value="EF_HAND_1"/>
    <property type="match status" value="4"/>
</dbReference>
<dbReference type="PROSITE" id="PS50222">
    <property type="entry name" value="EF_HAND_2"/>
    <property type="match status" value="4"/>
</dbReference>
<dbReference type="PROSITE" id="PS00107">
    <property type="entry name" value="PROTEIN_KINASE_ATP"/>
    <property type="match status" value="1"/>
</dbReference>
<dbReference type="PROSITE" id="PS50011">
    <property type="entry name" value="PROTEIN_KINASE_DOM"/>
    <property type="match status" value="1"/>
</dbReference>
<dbReference type="PROSITE" id="PS00108">
    <property type="entry name" value="PROTEIN_KINASE_ST"/>
    <property type="match status" value="1"/>
</dbReference>